<sequence>MTEWITAPGLTDYQEALAFMEARAAAIAAGEAGELVWLVEHPPLYTAGTSAKAADLLEARFPVHAVGRGGQYTYHGPGQRVVYVMLDLNRRGRDVRAFVKALENWVIDALAEFNLRGEIRDGRVGVWIARPDKAPLPDGSMREDKIAAIGVKLRRWVSFHGIAINVEPDLNHYAGIVPCGISGHGVTSLVDMGLPVGMDDLDLALRRSFARNFPPLAG</sequence>
<feature type="chain" id="PRO_0000321655" description="Octanoyltransferase">
    <location>
        <begin position="1"/>
        <end position="218"/>
    </location>
</feature>
<feature type="domain" description="BPL/LPL catalytic" evidence="2">
    <location>
        <begin position="30"/>
        <end position="217"/>
    </location>
</feature>
<feature type="active site" description="Acyl-thioester intermediate" evidence="1">
    <location>
        <position position="179"/>
    </location>
</feature>
<feature type="binding site" evidence="1">
    <location>
        <begin position="68"/>
        <end position="75"/>
    </location>
    <ligand>
        <name>substrate</name>
    </ligand>
</feature>
<feature type="binding site" evidence="1">
    <location>
        <begin position="148"/>
        <end position="150"/>
    </location>
    <ligand>
        <name>substrate</name>
    </ligand>
</feature>
<feature type="binding site" evidence="1">
    <location>
        <begin position="161"/>
        <end position="163"/>
    </location>
    <ligand>
        <name>substrate</name>
    </ligand>
</feature>
<feature type="site" description="Lowers pKa of active site Cys" evidence="1">
    <location>
        <position position="145"/>
    </location>
</feature>
<reference key="1">
    <citation type="submission" date="2006-12" db="EMBL/GenBank/DDBJ databases">
        <title>Complete sequence of chromosome 1 of Paracoccus denitrificans PD1222.</title>
        <authorList>
            <person name="Copeland A."/>
            <person name="Lucas S."/>
            <person name="Lapidus A."/>
            <person name="Barry K."/>
            <person name="Detter J.C."/>
            <person name="Glavina del Rio T."/>
            <person name="Hammon N."/>
            <person name="Israni S."/>
            <person name="Dalin E."/>
            <person name="Tice H."/>
            <person name="Pitluck S."/>
            <person name="Munk A.C."/>
            <person name="Brettin T."/>
            <person name="Bruce D."/>
            <person name="Han C."/>
            <person name="Tapia R."/>
            <person name="Gilna P."/>
            <person name="Schmutz J."/>
            <person name="Larimer F."/>
            <person name="Land M."/>
            <person name="Hauser L."/>
            <person name="Kyrpides N."/>
            <person name="Lykidis A."/>
            <person name="Spiro S."/>
            <person name="Richardson D.J."/>
            <person name="Moir J.W.B."/>
            <person name="Ferguson S.J."/>
            <person name="van Spanning R.J.M."/>
            <person name="Richardson P."/>
        </authorList>
    </citation>
    <scope>NUCLEOTIDE SEQUENCE [LARGE SCALE GENOMIC DNA]</scope>
    <source>
        <strain>Pd 1222</strain>
    </source>
</reference>
<name>LIPB_PARDP</name>
<keyword id="KW-0012">Acyltransferase</keyword>
<keyword id="KW-0963">Cytoplasm</keyword>
<keyword id="KW-1185">Reference proteome</keyword>
<keyword id="KW-0808">Transferase</keyword>
<accession>A1B3D5</accession>
<dbReference type="EC" id="2.3.1.181" evidence="1"/>
<dbReference type="EMBL" id="CP000489">
    <property type="protein sequence ID" value="ABL70029.1"/>
    <property type="molecule type" value="Genomic_DNA"/>
</dbReference>
<dbReference type="RefSeq" id="WP_011748226.1">
    <property type="nucleotide sequence ID" value="NC_008686.1"/>
</dbReference>
<dbReference type="SMR" id="A1B3D5"/>
<dbReference type="STRING" id="318586.Pden_1936"/>
<dbReference type="EnsemblBacteria" id="ABL70029">
    <property type="protein sequence ID" value="ABL70029"/>
    <property type="gene ID" value="Pden_1936"/>
</dbReference>
<dbReference type="GeneID" id="93450335"/>
<dbReference type="KEGG" id="pde:Pden_1936"/>
<dbReference type="eggNOG" id="COG0321">
    <property type="taxonomic scope" value="Bacteria"/>
</dbReference>
<dbReference type="HOGENOM" id="CLU_035168_3_0_5"/>
<dbReference type="OrthoDB" id="9787061at2"/>
<dbReference type="UniPathway" id="UPA00538">
    <property type="reaction ID" value="UER00592"/>
</dbReference>
<dbReference type="Proteomes" id="UP000000361">
    <property type="component" value="Chromosome 1"/>
</dbReference>
<dbReference type="GO" id="GO:0005737">
    <property type="term" value="C:cytoplasm"/>
    <property type="evidence" value="ECO:0007669"/>
    <property type="project" value="UniProtKB-SubCell"/>
</dbReference>
<dbReference type="GO" id="GO:0033819">
    <property type="term" value="F:lipoyl(octanoyl) transferase activity"/>
    <property type="evidence" value="ECO:0007669"/>
    <property type="project" value="UniProtKB-EC"/>
</dbReference>
<dbReference type="GO" id="GO:0036211">
    <property type="term" value="P:protein modification process"/>
    <property type="evidence" value="ECO:0007669"/>
    <property type="project" value="InterPro"/>
</dbReference>
<dbReference type="CDD" id="cd16444">
    <property type="entry name" value="LipB"/>
    <property type="match status" value="1"/>
</dbReference>
<dbReference type="Gene3D" id="3.30.930.10">
    <property type="entry name" value="Bira Bifunctional Protein, Domain 2"/>
    <property type="match status" value="1"/>
</dbReference>
<dbReference type="HAMAP" id="MF_00013">
    <property type="entry name" value="LipB"/>
    <property type="match status" value="1"/>
</dbReference>
<dbReference type="InterPro" id="IPR045864">
    <property type="entry name" value="aa-tRNA-synth_II/BPL/LPL"/>
</dbReference>
<dbReference type="InterPro" id="IPR004143">
    <property type="entry name" value="BPL_LPL_catalytic"/>
</dbReference>
<dbReference type="InterPro" id="IPR000544">
    <property type="entry name" value="Octanoyltransferase"/>
</dbReference>
<dbReference type="InterPro" id="IPR020605">
    <property type="entry name" value="Octanoyltransferase_CS"/>
</dbReference>
<dbReference type="NCBIfam" id="TIGR00214">
    <property type="entry name" value="lipB"/>
    <property type="match status" value="1"/>
</dbReference>
<dbReference type="NCBIfam" id="NF010921">
    <property type="entry name" value="PRK14341.1"/>
    <property type="match status" value="1"/>
</dbReference>
<dbReference type="NCBIfam" id="NF010925">
    <property type="entry name" value="PRK14345.1"/>
    <property type="match status" value="1"/>
</dbReference>
<dbReference type="PANTHER" id="PTHR10993:SF7">
    <property type="entry name" value="LIPOYLTRANSFERASE 2, MITOCHONDRIAL-RELATED"/>
    <property type="match status" value="1"/>
</dbReference>
<dbReference type="PANTHER" id="PTHR10993">
    <property type="entry name" value="OCTANOYLTRANSFERASE"/>
    <property type="match status" value="1"/>
</dbReference>
<dbReference type="Pfam" id="PF21948">
    <property type="entry name" value="LplA-B_cat"/>
    <property type="match status" value="1"/>
</dbReference>
<dbReference type="PIRSF" id="PIRSF016262">
    <property type="entry name" value="LPLase"/>
    <property type="match status" value="1"/>
</dbReference>
<dbReference type="SUPFAM" id="SSF55681">
    <property type="entry name" value="Class II aaRS and biotin synthetases"/>
    <property type="match status" value="1"/>
</dbReference>
<dbReference type="PROSITE" id="PS51733">
    <property type="entry name" value="BPL_LPL_CATALYTIC"/>
    <property type="match status" value="1"/>
</dbReference>
<dbReference type="PROSITE" id="PS01313">
    <property type="entry name" value="LIPB"/>
    <property type="match status" value="1"/>
</dbReference>
<comment type="function">
    <text evidence="1">Catalyzes the transfer of endogenously produced octanoic acid from octanoyl-acyl-carrier-protein onto the lipoyl domains of lipoate-dependent enzymes. Lipoyl-ACP can also act as a substrate although octanoyl-ACP is likely to be the physiological substrate.</text>
</comment>
<comment type="catalytic activity">
    <reaction evidence="1">
        <text>octanoyl-[ACP] + L-lysyl-[protein] = N(6)-octanoyl-L-lysyl-[protein] + holo-[ACP] + H(+)</text>
        <dbReference type="Rhea" id="RHEA:17665"/>
        <dbReference type="Rhea" id="RHEA-COMP:9636"/>
        <dbReference type="Rhea" id="RHEA-COMP:9685"/>
        <dbReference type="Rhea" id="RHEA-COMP:9752"/>
        <dbReference type="Rhea" id="RHEA-COMP:9928"/>
        <dbReference type="ChEBI" id="CHEBI:15378"/>
        <dbReference type="ChEBI" id="CHEBI:29969"/>
        <dbReference type="ChEBI" id="CHEBI:64479"/>
        <dbReference type="ChEBI" id="CHEBI:78463"/>
        <dbReference type="ChEBI" id="CHEBI:78809"/>
        <dbReference type="EC" id="2.3.1.181"/>
    </reaction>
</comment>
<comment type="pathway">
    <text evidence="1">Protein modification; protein lipoylation via endogenous pathway; protein N(6)-(lipoyl)lysine from octanoyl-[acyl-carrier-protein]: step 1/2.</text>
</comment>
<comment type="subcellular location">
    <subcellularLocation>
        <location evidence="1">Cytoplasm</location>
    </subcellularLocation>
</comment>
<comment type="miscellaneous">
    <text evidence="1">In the reaction, the free carboxyl group of octanoic acid is attached via an amide linkage to the epsilon-amino group of a specific lysine residue of lipoyl domains of lipoate-dependent enzymes.</text>
</comment>
<comment type="similarity">
    <text evidence="1">Belongs to the LipB family.</text>
</comment>
<protein>
    <recommendedName>
        <fullName evidence="1">Octanoyltransferase</fullName>
        <ecNumber evidence="1">2.3.1.181</ecNumber>
    </recommendedName>
    <alternativeName>
        <fullName evidence="1">Lipoate-protein ligase B</fullName>
    </alternativeName>
    <alternativeName>
        <fullName evidence="1">Lipoyl/octanoyl transferase</fullName>
    </alternativeName>
    <alternativeName>
        <fullName evidence="1">Octanoyl-[acyl-carrier-protein]-protein N-octanoyltransferase</fullName>
    </alternativeName>
</protein>
<gene>
    <name evidence="1" type="primary">lipB</name>
    <name type="ordered locus">Pden_1936</name>
</gene>
<proteinExistence type="inferred from homology"/>
<evidence type="ECO:0000255" key="1">
    <source>
        <dbReference type="HAMAP-Rule" id="MF_00013"/>
    </source>
</evidence>
<evidence type="ECO:0000255" key="2">
    <source>
        <dbReference type="PROSITE-ProRule" id="PRU01067"/>
    </source>
</evidence>
<organism>
    <name type="scientific">Paracoccus denitrificans (strain Pd 1222)</name>
    <dbReference type="NCBI Taxonomy" id="318586"/>
    <lineage>
        <taxon>Bacteria</taxon>
        <taxon>Pseudomonadati</taxon>
        <taxon>Pseudomonadota</taxon>
        <taxon>Alphaproteobacteria</taxon>
        <taxon>Rhodobacterales</taxon>
        <taxon>Paracoccaceae</taxon>
        <taxon>Paracoccus</taxon>
    </lineage>
</organism>